<name>RECA_PSEU2</name>
<comment type="function">
    <text evidence="1">Can catalyze the hydrolysis of ATP in the presence of single-stranded DNA, the ATP-dependent uptake of single-stranded DNA by duplex DNA, and the ATP-dependent hybridization of homologous single-stranded DNAs. It interacts with LexA causing its activation and leading to its autocatalytic cleavage.</text>
</comment>
<comment type="subcellular location">
    <subcellularLocation>
        <location evidence="1">Cytoplasm</location>
    </subcellularLocation>
</comment>
<comment type="similarity">
    <text evidence="1">Belongs to the RecA family.</text>
</comment>
<keyword id="KW-0067">ATP-binding</keyword>
<keyword id="KW-0963">Cytoplasm</keyword>
<keyword id="KW-0227">DNA damage</keyword>
<keyword id="KW-0233">DNA recombination</keyword>
<keyword id="KW-0234">DNA repair</keyword>
<keyword id="KW-0238">DNA-binding</keyword>
<keyword id="KW-0547">Nucleotide-binding</keyword>
<keyword id="KW-0742">SOS response</keyword>
<accession>Q4ZWP3</accession>
<dbReference type="EMBL" id="CP000075">
    <property type="protein sequence ID" value="AAY36429.1"/>
    <property type="molecule type" value="Genomic_DNA"/>
</dbReference>
<dbReference type="RefSeq" id="WP_002554688.1">
    <property type="nucleotide sequence ID" value="NC_007005.1"/>
</dbReference>
<dbReference type="RefSeq" id="YP_234467.1">
    <property type="nucleotide sequence ID" value="NC_007005.1"/>
</dbReference>
<dbReference type="SMR" id="Q4ZWP3"/>
<dbReference type="STRING" id="205918.Psyr_1378"/>
<dbReference type="GeneID" id="77277334"/>
<dbReference type="KEGG" id="psb:Psyr_1378"/>
<dbReference type="PATRIC" id="fig|205918.7.peg.1412"/>
<dbReference type="eggNOG" id="COG0468">
    <property type="taxonomic scope" value="Bacteria"/>
</dbReference>
<dbReference type="HOGENOM" id="CLU_040469_3_2_6"/>
<dbReference type="OrthoDB" id="9776733at2"/>
<dbReference type="Proteomes" id="UP000000426">
    <property type="component" value="Chromosome"/>
</dbReference>
<dbReference type="GO" id="GO:0005829">
    <property type="term" value="C:cytosol"/>
    <property type="evidence" value="ECO:0007669"/>
    <property type="project" value="TreeGrafter"/>
</dbReference>
<dbReference type="GO" id="GO:0005524">
    <property type="term" value="F:ATP binding"/>
    <property type="evidence" value="ECO:0007669"/>
    <property type="project" value="UniProtKB-UniRule"/>
</dbReference>
<dbReference type="GO" id="GO:0016887">
    <property type="term" value="F:ATP hydrolysis activity"/>
    <property type="evidence" value="ECO:0007669"/>
    <property type="project" value="InterPro"/>
</dbReference>
<dbReference type="GO" id="GO:0140664">
    <property type="term" value="F:ATP-dependent DNA damage sensor activity"/>
    <property type="evidence" value="ECO:0007669"/>
    <property type="project" value="InterPro"/>
</dbReference>
<dbReference type="GO" id="GO:0003684">
    <property type="term" value="F:damaged DNA binding"/>
    <property type="evidence" value="ECO:0007669"/>
    <property type="project" value="UniProtKB-UniRule"/>
</dbReference>
<dbReference type="GO" id="GO:0003697">
    <property type="term" value="F:single-stranded DNA binding"/>
    <property type="evidence" value="ECO:0007669"/>
    <property type="project" value="UniProtKB-UniRule"/>
</dbReference>
<dbReference type="GO" id="GO:0006310">
    <property type="term" value="P:DNA recombination"/>
    <property type="evidence" value="ECO:0007669"/>
    <property type="project" value="UniProtKB-UniRule"/>
</dbReference>
<dbReference type="GO" id="GO:0006281">
    <property type="term" value="P:DNA repair"/>
    <property type="evidence" value="ECO:0007669"/>
    <property type="project" value="UniProtKB-UniRule"/>
</dbReference>
<dbReference type="GO" id="GO:0009432">
    <property type="term" value="P:SOS response"/>
    <property type="evidence" value="ECO:0007669"/>
    <property type="project" value="UniProtKB-UniRule"/>
</dbReference>
<dbReference type="CDD" id="cd00983">
    <property type="entry name" value="RecA"/>
    <property type="match status" value="1"/>
</dbReference>
<dbReference type="FunFam" id="3.40.50.300:FF:000087">
    <property type="entry name" value="Recombinase RecA"/>
    <property type="match status" value="1"/>
</dbReference>
<dbReference type="Gene3D" id="3.40.50.300">
    <property type="entry name" value="P-loop containing nucleotide triphosphate hydrolases"/>
    <property type="match status" value="1"/>
</dbReference>
<dbReference type="HAMAP" id="MF_00268">
    <property type="entry name" value="RecA"/>
    <property type="match status" value="1"/>
</dbReference>
<dbReference type="InterPro" id="IPR003593">
    <property type="entry name" value="AAA+_ATPase"/>
</dbReference>
<dbReference type="InterPro" id="IPR013765">
    <property type="entry name" value="DNA_recomb/repair_RecA"/>
</dbReference>
<dbReference type="InterPro" id="IPR020584">
    <property type="entry name" value="DNA_recomb/repair_RecA_CS"/>
</dbReference>
<dbReference type="InterPro" id="IPR027417">
    <property type="entry name" value="P-loop_NTPase"/>
</dbReference>
<dbReference type="InterPro" id="IPR049261">
    <property type="entry name" value="RecA-like_C"/>
</dbReference>
<dbReference type="InterPro" id="IPR049428">
    <property type="entry name" value="RecA-like_N"/>
</dbReference>
<dbReference type="InterPro" id="IPR020588">
    <property type="entry name" value="RecA_ATP-bd"/>
</dbReference>
<dbReference type="InterPro" id="IPR023400">
    <property type="entry name" value="RecA_C_sf"/>
</dbReference>
<dbReference type="InterPro" id="IPR020587">
    <property type="entry name" value="RecA_monomer-monomer_interface"/>
</dbReference>
<dbReference type="NCBIfam" id="TIGR02012">
    <property type="entry name" value="tigrfam_recA"/>
    <property type="match status" value="1"/>
</dbReference>
<dbReference type="PANTHER" id="PTHR45900:SF1">
    <property type="entry name" value="MITOCHONDRIAL DNA REPAIR PROTEIN RECA HOMOLOG-RELATED"/>
    <property type="match status" value="1"/>
</dbReference>
<dbReference type="PANTHER" id="PTHR45900">
    <property type="entry name" value="RECA"/>
    <property type="match status" value="1"/>
</dbReference>
<dbReference type="Pfam" id="PF00154">
    <property type="entry name" value="RecA"/>
    <property type="match status" value="1"/>
</dbReference>
<dbReference type="Pfam" id="PF21096">
    <property type="entry name" value="RecA_C"/>
    <property type="match status" value="1"/>
</dbReference>
<dbReference type="PRINTS" id="PR00142">
    <property type="entry name" value="RECA"/>
</dbReference>
<dbReference type="SMART" id="SM00382">
    <property type="entry name" value="AAA"/>
    <property type="match status" value="1"/>
</dbReference>
<dbReference type="SUPFAM" id="SSF52540">
    <property type="entry name" value="P-loop containing nucleoside triphosphate hydrolases"/>
    <property type="match status" value="1"/>
</dbReference>
<dbReference type="SUPFAM" id="SSF54752">
    <property type="entry name" value="RecA protein, C-terminal domain"/>
    <property type="match status" value="1"/>
</dbReference>
<dbReference type="PROSITE" id="PS00321">
    <property type="entry name" value="RECA_1"/>
    <property type="match status" value="1"/>
</dbReference>
<dbReference type="PROSITE" id="PS50162">
    <property type="entry name" value="RECA_2"/>
    <property type="match status" value="1"/>
</dbReference>
<dbReference type="PROSITE" id="PS50163">
    <property type="entry name" value="RECA_3"/>
    <property type="match status" value="1"/>
</dbReference>
<sequence length="354" mass="37744">MDDNKKKALAAALGQIERQFGKGAVMRMGDHDRQAIPAISTGSLGLDIALGIGGLPKGRIVEIYGPESSGKTTLTLSVIAQAQKMGATCAFVDAEHALDPEYAGKLGVNVDDLLVSQPDTGEQALEITDMLVRSNAIDVIVVDSVAALVPKAEIEGEMGDMHVGLQARLMSQALRKITGNIKNANCLVIFINQIRMKIGVMFGSPETTTGGNALKFYASVRLDIRRTGAVKEGDEVVGSETRVKVVKNKVAPPFRQAEFQILYGKGIYLNGEIVDLAVLHGFVEKSGAWYSYQGSKIGQGKANSAKFLADNPEICKALEKQIRDKLLTPGVDTKAVGSREAVAADDMSEADVDI</sequence>
<organism>
    <name type="scientific">Pseudomonas syringae pv. syringae (strain B728a)</name>
    <dbReference type="NCBI Taxonomy" id="205918"/>
    <lineage>
        <taxon>Bacteria</taxon>
        <taxon>Pseudomonadati</taxon>
        <taxon>Pseudomonadota</taxon>
        <taxon>Gammaproteobacteria</taxon>
        <taxon>Pseudomonadales</taxon>
        <taxon>Pseudomonadaceae</taxon>
        <taxon>Pseudomonas</taxon>
        <taxon>Pseudomonas syringae</taxon>
    </lineage>
</organism>
<protein>
    <recommendedName>
        <fullName evidence="1">Protein RecA</fullName>
    </recommendedName>
    <alternativeName>
        <fullName evidence="1">Recombinase A</fullName>
    </alternativeName>
</protein>
<gene>
    <name evidence="1" type="primary">recA</name>
    <name type="ordered locus">Psyr_1378</name>
</gene>
<feature type="chain" id="PRO_0000122807" description="Protein RecA">
    <location>
        <begin position="1"/>
        <end position="354"/>
    </location>
</feature>
<feature type="binding site" evidence="1">
    <location>
        <begin position="65"/>
        <end position="72"/>
    </location>
    <ligand>
        <name>ATP</name>
        <dbReference type="ChEBI" id="CHEBI:30616"/>
    </ligand>
</feature>
<evidence type="ECO:0000255" key="1">
    <source>
        <dbReference type="HAMAP-Rule" id="MF_00268"/>
    </source>
</evidence>
<reference key="1">
    <citation type="journal article" date="2005" name="Proc. Natl. Acad. Sci. U.S.A.">
        <title>Comparison of the complete genome sequences of Pseudomonas syringae pv. syringae B728a and pv. tomato DC3000.</title>
        <authorList>
            <person name="Feil H."/>
            <person name="Feil W.S."/>
            <person name="Chain P."/>
            <person name="Larimer F."/>
            <person name="Dibartolo G."/>
            <person name="Copeland A."/>
            <person name="Lykidis A."/>
            <person name="Trong S."/>
            <person name="Nolan M."/>
            <person name="Goltsman E."/>
            <person name="Thiel J."/>
            <person name="Malfatti S."/>
            <person name="Loper J.E."/>
            <person name="Lapidus A."/>
            <person name="Detter J.C."/>
            <person name="Land M."/>
            <person name="Richardson P.M."/>
            <person name="Kyrpides N.C."/>
            <person name="Ivanova N."/>
            <person name="Lindow S.E."/>
        </authorList>
    </citation>
    <scope>NUCLEOTIDE SEQUENCE [LARGE SCALE GENOMIC DNA]</scope>
    <source>
        <strain>B728a</strain>
    </source>
</reference>
<proteinExistence type="inferred from homology"/>